<evidence type="ECO:0000255" key="1">
    <source>
        <dbReference type="HAMAP-Rule" id="MF_00059"/>
    </source>
</evidence>
<proteinExistence type="inferred from homology"/>
<keyword id="KW-0240">DNA-directed RNA polymerase</keyword>
<keyword id="KW-0548">Nucleotidyltransferase</keyword>
<keyword id="KW-0804">Transcription</keyword>
<keyword id="KW-0808">Transferase</keyword>
<name>RPOA_STRPC</name>
<feature type="chain" id="PRO_0000264554" description="DNA-directed RNA polymerase subunit alpha">
    <location>
        <begin position="1"/>
        <end position="312"/>
    </location>
</feature>
<feature type="region of interest" description="Alpha N-terminal domain (alpha-NTD)" evidence="1">
    <location>
        <begin position="1"/>
        <end position="226"/>
    </location>
</feature>
<feature type="region of interest" description="Alpha C-terminal domain (alpha-CTD)" evidence="1">
    <location>
        <begin position="242"/>
        <end position="312"/>
    </location>
</feature>
<reference key="1">
    <citation type="journal article" date="2006" name="Proc. Natl. Acad. Sci. U.S.A.">
        <title>Molecular genetic anatomy of inter- and intraserotype variation in the human bacterial pathogen group A Streptococcus.</title>
        <authorList>
            <person name="Beres S.B."/>
            <person name="Richter E.W."/>
            <person name="Nagiec M.J."/>
            <person name="Sumby P."/>
            <person name="Porcella S.F."/>
            <person name="DeLeo F.R."/>
            <person name="Musser J.M."/>
        </authorList>
    </citation>
    <scope>NUCLEOTIDE SEQUENCE [LARGE SCALE GENOMIC DNA]</scope>
    <source>
        <strain>MGAS9429</strain>
    </source>
</reference>
<gene>
    <name evidence="1" type="primary">rpoA</name>
    <name type="ordered locus">MGAS9429_Spy0070</name>
</gene>
<protein>
    <recommendedName>
        <fullName evidence="1">DNA-directed RNA polymerase subunit alpha</fullName>
        <shortName evidence="1">RNAP subunit alpha</shortName>
        <ecNumber evidence="1">2.7.7.6</ecNumber>
    </recommendedName>
    <alternativeName>
        <fullName evidence="1">RNA polymerase subunit alpha</fullName>
    </alternativeName>
    <alternativeName>
        <fullName evidence="1">Transcriptase subunit alpha</fullName>
    </alternativeName>
</protein>
<dbReference type="EC" id="2.7.7.6" evidence="1"/>
<dbReference type="EMBL" id="CP000259">
    <property type="protein sequence ID" value="ABF31258.1"/>
    <property type="molecule type" value="Genomic_DNA"/>
</dbReference>
<dbReference type="RefSeq" id="WP_002986607.1">
    <property type="nucleotide sequence ID" value="NC_008021.1"/>
</dbReference>
<dbReference type="SMR" id="Q1JNZ1"/>
<dbReference type="KEGG" id="spk:MGAS9429_Spy0070"/>
<dbReference type="HOGENOM" id="CLU_053084_0_1_9"/>
<dbReference type="Proteomes" id="UP000002433">
    <property type="component" value="Chromosome"/>
</dbReference>
<dbReference type="GO" id="GO:0005737">
    <property type="term" value="C:cytoplasm"/>
    <property type="evidence" value="ECO:0007669"/>
    <property type="project" value="UniProtKB-ARBA"/>
</dbReference>
<dbReference type="GO" id="GO:0000428">
    <property type="term" value="C:DNA-directed RNA polymerase complex"/>
    <property type="evidence" value="ECO:0007669"/>
    <property type="project" value="UniProtKB-KW"/>
</dbReference>
<dbReference type="GO" id="GO:0003677">
    <property type="term" value="F:DNA binding"/>
    <property type="evidence" value="ECO:0007669"/>
    <property type="project" value="UniProtKB-UniRule"/>
</dbReference>
<dbReference type="GO" id="GO:0003899">
    <property type="term" value="F:DNA-directed RNA polymerase activity"/>
    <property type="evidence" value="ECO:0007669"/>
    <property type="project" value="UniProtKB-UniRule"/>
</dbReference>
<dbReference type="GO" id="GO:0046983">
    <property type="term" value="F:protein dimerization activity"/>
    <property type="evidence" value="ECO:0007669"/>
    <property type="project" value="InterPro"/>
</dbReference>
<dbReference type="GO" id="GO:0006351">
    <property type="term" value="P:DNA-templated transcription"/>
    <property type="evidence" value="ECO:0007669"/>
    <property type="project" value="UniProtKB-UniRule"/>
</dbReference>
<dbReference type="CDD" id="cd06928">
    <property type="entry name" value="RNAP_alpha_NTD"/>
    <property type="match status" value="1"/>
</dbReference>
<dbReference type="FunFam" id="1.10.150.20:FF:000001">
    <property type="entry name" value="DNA-directed RNA polymerase subunit alpha"/>
    <property type="match status" value="1"/>
</dbReference>
<dbReference type="FunFam" id="2.170.120.12:FF:000001">
    <property type="entry name" value="DNA-directed RNA polymerase subunit alpha"/>
    <property type="match status" value="1"/>
</dbReference>
<dbReference type="Gene3D" id="1.10.150.20">
    <property type="entry name" value="5' to 3' exonuclease, C-terminal subdomain"/>
    <property type="match status" value="1"/>
</dbReference>
<dbReference type="Gene3D" id="2.170.120.12">
    <property type="entry name" value="DNA-directed RNA polymerase, insert domain"/>
    <property type="match status" value="1"/>
</dbReference>
<dbReference type="Gene3D" id="3.30.1360.10">
    <property type="entry name" value="RNA polymerase, RBP11-like subunit"/>
    <property type="match status" value="1"/>
</dbReference>
<dbReference type="HAMAP" id="MF_00059">
    <property type="entry name" value="RNApol_bact_RpoA"/>
    <property type="match status" value="1"/>
</dbReference>
<dbReference type="InterPro" id="IPR011262">
    <property type="entry name" value="DNA-dir_RNA_pol_insert"/>
</dbReference>
<dbReference type="InterPro" id="IPR011263">
    <property type="entry name" value="DNA-dir_RNA_pol_RpoA/D/Rpb3"/>
</dbReference>
<dbReference type="InterPro" id="IPR011773">
    <property type="entry name" value="DNA-dir_RpoA"/>
</dbReference>
<dbReference type="InterPro" id="IPR036603">
    <property type="entry name" value="RBP11-like"/>
</dbReference>
<dbReference type="InterPro" id="IPR011260">
    <property type="entry name" value="RNAP_asu_C"/>
</dbReference>
<dbReference type="InterPro" id="IPR036643">
    <property type="entry name" value="RNApol_insert_sf"/>
</dbReference>
<dbReference type="NCBIfam" id="NF003513">
    <property type="entry name" value="PRK05182.1-2"/>
    <property type="match status" value="1"/>
</dbReference>
<dbReference type="NCBIfam" id="NF003515">
    <property type="entry name" value="PRK05182.2-1"/>
    <property type="match status" value="1"/>
</dbReference>
<dbReference type="NCBIfam" id="NF003518">
    <property type="entry name" value="PRK05182.2-4"/>
    <property type="match status" value="1"/>
</dbReference>
<dbReference type="NCBIfam" id="NF003519">
    <property type="entry name" value="PRK05182.2-5"/>
    <property type="match status" value="1"/>
</dbReference>
<dbReference type="NCBIfam" id="TIGR02027">
    <property type="entry name" value="rpoA"/>
    <property type="match status" value="1"/>
</dbReference>
<dbReference type="Pfam" id="PF01000">
    <property type="entry name" value="RNA_pol_A_bac"/>
    <property type="match status" value="1"/>
</dbReference>
<dbReference type="Pfam" id="PF03118">
    <property type="entry name" value="RNA_pol_A_CTD"/>
    <property type="match status" value="1"/>
</dbReference>
<dbReference type="Pfam" id="PF01193">
    <property type="entry name" value="RNA_pol_L"/>
    <property type="match status" value="1"/>
</dbReference>
<dbReference type="SMART" id="SM00662">
    <property type="entry name" value="RPOLD"/>
    <property type="match status" value="1"/>
</dbReference>
<dbReference type="SUPFAM" id="SSF47789">
    <property type="entry name" value="C-terminal domain of RNA polymerase alpha subunit"/>
    <property type="match status" value="1"/>
</dbReference>
<dbReference type="SUPFAM" id="SSF56553">
    <property type="entry name" value="Insert subdomain of RNA polymerase alpha subunit"/>
    <property type="match status" value="1"/>
</dbReference>
<dbReference type="SUPFAM" id="SSF55257">
    <property type="entry name" value="RBP11-like subunits of RNA polymerase"/>
    <property type="match status" value="1"/>
</dbReference>
<organism>
    <name type="scientific">Streptococcus pyogenes serotype M12 (strain MGAS9429)</name>
    <dbReference type="NCBI Taxonomy" id="370551"/>
    <lineage>
        <taxon>Bacteria</taxon>
        <taxon>Bacillati</taxon>
        <taxon>Bacillota</taxon>
        <taxon>Bacilli</taxon>
        <taxon>Lactobacillales</taxon>
        <taxon>Streptococcaceae</taxon>
        <taxon>Streptococcus</taxon>
    </lineage>
</organism>
<sequence>MIEFEKPIITKIDENKDYGRFVIEPLERGYGTTLGNSLRRVLLSSLPGAAVTSIKIDGVLHEFDTIPGVREDVMQIILNVKGLAVKSYVEDEKIIELEVEGPAEVTAGDILTDSDIELVNPDHYLFTIAEGHSLRATMTVAKKRGYVPAEGNKKDDAPVGTLAVDSIYTPVKKVNYQVEPARVGSNDGFDKLTIEIMTNGTIIPEDALGLSARVLIEHLNLFTDLTEVAKATEVMKETEKVNDEKVLDRTIEELDLSVRSYNCLKRAGINTVFDLTEKSEPEMMKVRNLGRKSLEEVKVKLADLGLGLKNDK</sequence>
<accession>Q1JNZ1</accession>
<comment type="function">
    <text evidence="1">DNA-dependent RNA polymerase catalyzes the transcription of DNA into RNA using the four ribonucleoside triphosphates as substrates.</text>
</comment>
<comment type="catalytic activity">
    <reaction evidence="1">
        <text>RNA(n) + a ribonucleoside 5'-triphosphate = RNA(n+1) + diphosphate</text>
        <dbReference type="Rhea" id="RHEA:21248"/>
        <dbReference type="Rhea" id="RHEA-COMP:14527"/>
        <dbReference type="Rhea" id="RHEA-COMP:17342"/>
        <dbReference type="ChEBI" id="CHEBI:33019"/>
        <dbReference type="ChEBI" id="CHEBI:61557"/>
        <dbReference type="ChEBI" id="CHEBI:140395"/>
        <dbReference type="EC" id="2.7.7.6"/>
    </reaction>
</comment>
<comment type="subunit">
    <text evidence="1">Homodimer. The RNAP catalytic core consists of 2 alpha, 1 beta, 1 beta' and 1 omega subunit. When a sigma factor is associated with the core the holoenzyme is formed, which can initiate transcription.</text>
</comment>
<comment type="domain">
    <text evidence="1">The N-terminal domain is essential for RNAP assembly and basal transcription, whereas the C-terminal domain is involved in interaction with transcriptional regulators and with upstream promoter elements.</text>
</comment>
<comment type="similarity">
    <text evidence="1">Belongs to the RNA polymerase alpha chain family.</text>
</comment>